<comment type="function">
    <text evidence="2 5 7 8 9 11 13 14">Component of the mechanistic target of rapamycin complex 2 (mTORC2), which transduces signals from growth factors to pathways involved in proliferation, cytoskeletal organization, lipogenesis and anabolic output (PubMed:16962653, PubMed:21757730, PubMed:24161930, PubMed:30837283, PubMed:33850054). In response to growth factors, mTORC2 phosphorylates and activates AGC protein kinase family members, including AKT (AKT1, AKT2 and AKT3), PKC (PRKCA, PRKCB and PRKCE) and SGK1 (By similarity). In contrast to mTORC1, mTORC2 is nutrient-insensitive (By similarity). Within the mTORC2 complex, MAPKAP1/SIN1 acts as a substrate adapter which recognizes and binds AGC protein kinase family members for phosphorylation by MTOR (PubMed:33850054). mTORC2 plays a critical role in AKT1 activation by mediating phosphorylation of different sites depending on the context, such as 'Thr-450', 'Ser-473', 'Ser-477' or 'Thr-479', facilitating the phosphorylation of the activation loop of AKT1 on 'Thr-308' by PDPK1/PDK1 which is a prerequisite for full activation (PubMed:33850054). mTORC2 catalyzes the phosphorylation of SGK1 at 'Ser-422' and of PRKCA on 'Ser-657' (PubMed:21757730, PubMed:30837283). The mTORC2 complex also phosphorylates various proteins involved in insulin signaling, such as FBXW8 and IGF2BP1 (PubMed:23142081, PubMed:23388827). mTORC2 acts upstream of Rho GTPases to regulate the actin cytoskeleton, probably by activating one or more Rho-type guanine nucleotide exchange factors (By similarity). mTORC2 promotes the serum-induced formation of stress-fibers or F-actin (By similarity). MAPKAP1 inhibits MAP3K2 by preventing its dimerization and autophosphorylation (By similarity). Inhibits HRAS and KRAS independently of mTORC2 complex (By similarity). Enhances osmotic stress-induced phosphorylation of ATF2 and ATF2-mediated transcription (By similarity). Involved in ciliogenesis, regulates cilia length through its interaction with CCDC28B independently of mTORC2 complex (By similarity).</text>
</comment>
<comment type="activity regulation">
    <text evidence="2">Phosphatidylinositol 3,4,5-trisphosphate (PI(3,4,5)P3) promotes MTOR activation by relieving MAPKAP1/SIN1-mediated inhibition of MTOR that takes place in absence of PI(3,4,5)P3.</text>
</comment>
<comment type="subunit">
    <text evidence="1 2 11">Component of the mechanistic target of rapamycin complex 2 (mTORC2), consisting in two heterotretramers composed of MTOR, MLST8, RICTOR and MAPKAP1/SIN1 (PubMed:24161930). The mTORC2 core complex associates with PRR5/PROTOR1 and/or PRR5L/PROTOR2 (By similarity). Contrary to mTORC1, mTORC2 does not bind to and is not sensitive to FKBP12-rapamycin (By similarity). Interacts with MAP3K2 (By similarity). Interacts with ATF2 (By similarity). Interacts with MAPK8 (By similarity). Interacts with GTP-bound HRAS and KRAS; inhibiting their activity (By similarity). Interacts with IFNAR2 (By similarity).</text>
</comment>
<comment type="subcellular location">
    <subcellularLocation>
        <location evidence="2">Cell membrane</location>
        <topology evidence="2">Peripheral membrane protein</topology>
    </subcellularLocation>
    <subcellularLocation>
        <location evidence="2">Endoplasmic reticulum membrane</location>
        <topology evidence="2">Peripheral membrane protein</topology>
    </subcellularLocation>
    <subcellularLocation>
        <location evidence="2">Early endosome membrane</location>
        <topology evidence="2">Peripheral membrane protein</topology>
    </subcellularLocation>
    <subcellularLocation>
        <location evidence="2">Late endosome membrane</location>
        <topology evidence="2">Peripheral membrane protein</topology>
    </subcellularLocation>
    <subcellularLocation>
        <location evidence="2">Lysosome membrane</location>
        <topology evidence="2">Peripheral membrane protein</topology>
    </subcellularLocation>
    <subcellularLocation>
        <location evidence="2">Golgi apparatus membrane</location>
        <topology evidence="2">Peripheral membrane protein</topology>
    </subcellularLocation>
    <subcellularLocation>
        <location evidence="2">Mitochondrion outer membrane</location>
        <topology evidence="2">Peripheral membrane protein</topology>
    </subcellularLocation>
    <subcellularLocation>
        <location evidence="17">Cytoplasm</location>
        <location evidence="17">Perinuclear region</location>
    </subcellularLocation>
    <subcellularLocation>
        <location evidence="2">Nucleus</location>
    </subcellularLocation>
    <text evidence="2 13">The mTORC2 complex localizes to membranes: mTORC2 is active at the plasma membrane, endoplasmic reticulum membrane, lysosomes and perinuclear region (By similarity). Iin lysosomal membrane, mTORC2 is sensitive to lysosomal positioning in the cell (By similarity). Following phosphorylation by PKC, localizes to the perinuclear region, where the mTORC2 complexe specifically phosphorylates SGK1, but not AKT (PubMed:30837283).</text>
</comment>
<comment type="alternative products">
    <event type="alternative splicing"/>
    <isoform>
        <id>Q8BKH7-1</id>
        <name>1</name>
        <sequence type="displayed"/>
    </isoform>
    <isoform>
        <id>Q8BKH7-2</id>
        <name>2</name>
        <sequence type="described" ref="VSP_033209"/>
    </isoform>
    <isoform>
        <id>Q8BKH7-3</id>
        <name>3</name>
        <sequence type="described" ref="VSP_033208"/>
    </isoform>
</comment>
<comment type="tissue specificity">
    <text evidence="6">Uniquitously expressed, with highest levels in testis, kidney and liver. Present in renal tubule cells (at protein level).</text>
</comment>
<comment type="domain">
    <text evidence="2">The CRIM domain forms a ubiquitin-like fold with a characteristic acidic loop, which recognizes and binds AGC protein kinase family members substrates.</text>
</comment>
<comment type="domain">
    <text evidence="2">Arg-83 is required for the phosphorylation of SGK1, but not AKT (AKT1, AKT2 and AKT3): SGK1 promotes a large conformation change of the N-terminus of MAPKAP1/SIN1, promoting formation of a salt-bridge with RICTOR, leading to SGK1 phosphorylation.</text>
</comment>
<comment type="domain">
    <text evidence="2">The SIN1-type PH binds phosphatidylinositol 3,4,5-trisphosphate (PI(3,4,5)P3). It plays a dual role in mTORC2: in absence of PI(3,4,5)P3, it binds and inactivates MTOR. PI(3,4,5)P3-binding relieves the inhibition, leading to mTORC2 activation.</text>
</comment>
<comment type="PTM">
    <text evidence="10 11 12 13">Phosphorylation at Ser-128 by PKC promotes relocalization to the perinuclear region, where the mTORC2 complex specifically mediates phosphorylation of SGK1 (PubMed:30837283). Phosphorylated at Thr-86 by AKT1 or RPS6KB1 in the presence of growth factors; the effect of this phosphorylation is however unclear (PubMed:23684622, PubMed:24161930, PubMed:26235620). According to two studies, phosphorylation at Thr-86 by AKT1 is part of a positive feedback loop that increases mTORC2 activation (PubMed:23684622, PubMed:26235620). According to another study, phosphorylation at Thr-86 and Thr-398 by RPS6KB1 promotes dissociation from the mTORC2 complex, leading to inhibit mTORC2 signaling (PubMed:24161930).</text>
</comment>
<comment type="disruption phenotype">
    <text evidence="5">Death during early embryonic stages.</text>
</comment>
<comment type="similarity">
    <text evidence="16">Belongs to the SIN1 family.</text>
</comment>
<keyword id="KW-0007">Acetylation</keyword>
<keyword id="KW-0025">Alternative splicing</keyword>
<keyword id="KW-1003">Cell membrane</keyword>
<keyword id="KW-0963">Cytoplasm</keyword>
<keyword id="KW-0256">Endoplasmic reticulum</keyword>
<keyword id="KW-0967">Endosome</keyword>
<keyword id="KW-0333">Golgi apparatus</keyword>
<keyword id="KW-0458">Lysosome</keyword>
<keyword id="KW-0472">Membrane</keyword>
<keyword id="KW-0496">Mitochondrion</keyword>
<keyword id="KW-1000">Mitochondrion outer membrane</keyword>
<keyword id="KW-0539">Nucleus</keyword>
<keyword id="KW-0597">Phosphoprotein</keyword>
<keyword id="KW-1185">Reference proteome</keyword>
<keyword id="KW-0346">Stress response</keyword>
<evidence type="ECO:0000250" key="1">
    <source>
        <dbReference type="UniProtKB" id="Q6QD73"/>
    </source>
</evidence>
<evidence type="ECO:0000250" key="2">
    <source>
        <dbReference type="UniProtKB" id="Q9BPZ7"/>
    </source>
</evidence>
<evidence type="ECO:0000255" key="3"/>
<evidence type="ECO:0000256" key="4">
    <source>
        <dbReference type="SAM" id="MobiDB-lite"/>
    </source>
</evidence>
<evidence type="ECO:0000269" key="5">
    <source>
    </source>
</evidence>
<evidence type="ECO:0000269" key="6">
    <source>
    </source>
</evidence>
<evidence type="ECO:0000269" key="7">
    <source>
    </source>
</evidence>
<evidence type="ECO:0000269" key="8">
    <source>
    </source>
</evidence>
<evidence type="ECO:0000269" key="9">
    <source>
    </source>
</evidence>
<evidence type="ECO:0000269" key="10">
    <source>
    </source>
</evidence>
<evidence type="ECO:0000269" key="11">
    <source>
    </source>
</evidence>
<evidence type="ECO:0000269" key="12">
    <source>
    </source>
</evidence>
<evidence type="ECO:0000269" key="13">
    <source>
    </source>
</evidence>
<evidence type="ECO:0000269" key="14">
    <source>
    </source>
</evidence>
<evidence type="ECO:0000303" key="15">
    <source>
    </source>
</evidence>
<evidence type="ECO:0000305" key="16"/>
<evidence type="ECO:0000305" key="17">
    <source>
    </source>
</evidence>
<evidence type="ECO:0000312" key="18">
    <source>
        <dbReference type="MGI" id="MGI:2444554"/>
    </source>
</evidence>
<accession>Q8BKH7</accession>
<accession>A2AN72</accession>
<accession>A2AN74</accession>
<accession>A2AR13</accession>
<accession>A2AR16</accession>
<accession>Q80UY4</accession>
<accession>Q8BMV5</accession>
<accession>Q8R2N9</accession>
<organism>
    <name type="scientific">Mus musculus</name>
    <name type="common">Mouse</name>
    <dbReference type="NCBI Taxonomy" id="10090"/>
    <lineage>
        <taxon>Eukaryota</taxon>
        <taxon>Metazoa</taxon>
        <taxon>Chordata</taxon>
        <taxon>Craniata</taxon>
        <taxon>Vertebrata</taxon>
        <taxon>Euteleostomi</taxon>
        <taxon>Mammalia</taxon>
        <taxon>Eutheria</taxon>
        <taxon>Euarchontoglires</taxon>
        <taxon>Glires</taxon>
        <taxon>Rodentia</taxon>
        <taxon>Myomorpha</taxon>
        <taxon>Muroidea</taxon>
        <taxon>Muridae</taxon>
        <taxon>Murinae</taxon>
        <taxon>Mus</taxon>
        <taxon>Mus</taxon>
    </lineage>
</organism>
<proteinExistence type="evidence at protein level"/>
<dbReference type="EMBL" id="AK027932">
    <property type="protein sequence ID" value="BAC25671.1"/>
    <property type="molecule type" value="mRNA"/>
</dbReference>
<dbReference type="EMBL" id="AK052045">
    <property type="protein sequence ID" value="BAC34838.1"/>
    <property type="molecule type" value="mRNA"/>
</dbReference>
<dbReference type="EMBL" id="AK132263">
    <property type="protein sequence ID" value="BAE21066.1"/>
    <property type="molecule type" value="mRNA"/>
</dbReference>
<dbReference type="EMBL" id="AL808102">
    <property type="status" value="NOT_ANNOTATED_CDS"/>
    <property type="molecule type" value="Genomic_DNA"/>
</dbReference>
<dbReference type="EMBL" id="AL845262">
    <property type="status" value="NOT_ANNOTATED_CDS"/>
    <property type="molecule type" value="Genomic_DNA"/>
</dbReference>
<dbReference type="EMBL" id="BC027377">
    <property type="protein sequence ID" value="AAH27377.1"/>
    <property type="molecule type" value="mRNA"/>
</dbReference>
<dbReference type="EMBL" id="BC031579">
    <property type="protein sequence ID" value="AAH31579.1"/>
    <property type="molecule type" value="mRNA"/>
</dbReference>
<dbReference type="EMBL" id="BC043296">
    <property type="protein sequence ID" value="AAH43296.1"/>
    <property type="molecule type" value="mRNA"/>
</dbReference>
<dbReference type="EMBL" id="BC090644">
    <property type="protein sequence ID" value="AAH90644.1"/>
    <property type="molecule type" value="mRNA"/>
</dbReference>
<dbReference type="EMBL" id="BC096618">
    <property type="protein sequence ID" value="AAH96618.1"/>
    <property type="molecule type" value="mRNA"/>
</dbReference>
<dbReference type="CCDS" id="CCDS15948.1">
    <molecule id="Q8BKH7-1"/>
</dbReference>
<dbReference type="CCDS" id="CCDS71035.1">
    <molecule id="Q8BKH7-3"/>
</dbReference>
<dbReference type="CCDS" id="CCDS89477.1">
    <molecule id="Q8BKH7-2"/>
</dbReference>
<dbReference type="RefSeq" id="NP_001277554.1">
    <molecule id="Q8BKH7-1"/>
    <property type="nucleotide sequence ID" value="NM_001290625.1"/>
</dbReference>
<dbReference type="RefSeq" id="NP_001277555.1">
    <molecule id="Q8BKH7-3"/>
    <property type="nucleotide sequence ID" value="NM_001290626.1"/>
</dbReference>
<dbReference type="RefSeq" id="NP_001349848.1">
    <molecule id="Q8BKH7-1"/>
    <property type="nucleotide sequence ID" value="NM_001362919.1"/>
</dbReference>
<dbReference type="RefSeq" id="NP_001349849.1">
    <molecule id="Q8BKH7-3"/>
    <property type="nucleotide sequence ID" value="NM_001362920.1"/>
</dbReference>
<dbReference type="RefSeq" id="NP_001349850.1">
    <molecule id="Q8BKH7-2"/>
    <property type="nucleotide sequence ID" value="NM_001362921.1"/>
</dbReference>
<dbReference type="RefSeq" id="NP_796319.1">
    <molecule id="Q8BKH7-1"/>
    <property type="nucleotide sequence ID" value="NM_177345.4"/>
</dbReference>
<dbReference type="RefSeq" id="XP_006498038.1">
    <molecule id="Q8BKH7-1"/>
    <property type="nucleotide sequence ID" value="XM_006497975.2"/>
</dbReference>
<dbReference type="RefSeq" id="XP_006498041.1">
    <molecule id="Q8BKH7-2"/>
    <property type="nucleotide sequence ID" value="XM_006497978.5"/>
</dbReference>
<dbReference type="RefSeq" id="XP_006498045.1">
    <property type="nucleotide sequence ID" value="XM_006497982.2"/>
</dbReference>
<dbReference type="RefSeq" id="XP_006498046.1">
    <molecule id="Q8BKH7-3"/>
    <property type="nucleotide sequence ID" value="XM_006497983.3"/>
</dbReference>
<dbReference type="RefSeq" id="XP_011237384.1">
    <property type="nucleotide sequence ID" value="XM_011239082.2"/>
</dbReference>
<dbReference type="RefSeq" id="XP_011237385.1">
    <molecule id="Q8BKH7-1"/>
    <property type="nucleotide sequence ID" value="XM_011239083.3"/>
</dbReference>
<dbReference type="RefSeq" id="XP_011237386.1">
    <molecule id="Q8BKH7-1"/>
    <property type="nucleotide sequence ID" value="XM_011239084.4"/>
</dbReference>
<dbReference type="RefSeq" id="XP_011237387.1">
    <property type="nucleotide sequence ID" value="XM_011239085.2"/>
</dbReference>
<dbReference type="RefSeq" id="XP_017172932.1">
    <property type="nucleotide sequence ID" value="XM_017317443.1"/>
</dbReference>
<dbReference type="RefSeq" id="XP_030105839.1">
    <molecule id="Q8BKH7-1"/>
    <property type="nucleotide sequence ID" value="XM_030249979.2"/>
</dbReference>
<dbReference type="RefSeq" id="XP_030105844.1">
    <molecule id="Q8BKH7-1"/>
    <property type="nucleotide sequence ID" value="XM_030249984.2"/>
</dbReference>
<dbReference type="RefSeq" id="XP_030105857.1">
    <molecule id="Q8BKH7-3"/>
    <property type="nucleotide sequence ID" value="XM_030249997.2"/>
</dbReference>
<dbReference type="RefSeq" id="XP_030105858.1">
    <molecule id="Q8BKH7-3"/>
    <property type="nucleotide sequence ID" value="XM_030249998.1"/>
</dbReference>
<dbReference type="RefSeq" id="XP_030105859.1">
    <molecule id="Q8BKH7-3"/>
    <property type="nucleotide sequence ID" value="XM_030249999.2"/>
</dbReference>
<dbReference type="RefSeq" id="XP_030105861.1">
    <molecule id="Q8BKH7-3"/>
    <property type="nucleotide sequence ID" value="XM_030250001.1"/>
</dbReference>
<dbReference type="RefSeq" id="XP_036016785.1">
    <molecule id="Q8BKH7-3"/>
    <property type="nucleotide sequence ID" value="XM_036160892.1"/>
</dbReference>
<dbReference type="RefSeq" id="XP_036016792.1">
    <molecule id="Q8BKH7-3"/>
    <property type="nucleotide sequence ID" value="XM_036160899.1"/>
</dbReference>
<dbReference type="SMR" id="Q8BKH7"/>
<dbReference type="BioGRID" id="230681">
    <property type="interactions" value="4"/>
</dbReference>
<dbReference type="ComplexPortal" id="CPX-4472">
    <property type="entry name" value="mTORC2 complex"/>
</dbReference>
<dbReference type="DIP" id="DIP-57240N"/>
<dbReference type="FunCoup" id="Q8BKH7">
    <property type="interactions" value="4873"/>
</dbReference>
<dbReference type="IntAct" id="Q8BKH7">
    <property type="interactions" value="7"/>
</dbReference>
<dbReference type="MINT" id="Q8BKH7"/>
<dbReference type="STRING" id="10090.ENSMUSP00000116494"/>
<dbReference type="iPTMnet" id="Q8BKH7"/>
<dbReference type="PhosphoSitePlus" id="Q8BKH7"/>
<dbReference type="SwissPalm" id="Q8BKH7"/>
<dbReference type="jPOST" id="Q8BKH7"/>
<dbReference type="PaxDb" id="10090-ENSMUSP00000116494"/>
<dbReference type="PeptideAtlas" id="Q8BKH7"/>
<dbReference type="ProteomicsDB" id="261365">
    <molecule id="Q8BKH7-1"/>
</dbReference>
<dbReference type="ProteomicsDB" id="261366">
    <molecule id="Q8BKH7-2"/>
</dbReference>
<dbReference type="ProteomicsDB" id="261367">
    <molecule id="Q8BKH7-3"/>
</dbReference>
<dbReference type="Pumba" id="Q8BKH7"/>
<dbReference type="Antibodypedia" id="30572">
    <property type="antibodies" value="318 antibodies from 39 providers"/>
</dbReference>
<dbReference type="DNASU" id="227743"/>
<dbReference type="Ensembl" id="ENSMUST00000113123.8">
    <molecule id="Q8BKH7-3"/>
    <property type="protein sequence ID" value="ENSMUSP00000108748.2"/>
    <property type="gene ID" value="ENSMUSG00000038696.15"/>
</dbReference>
<dbReference type="Ensembl" id="ENSMUST00000113124.8">
    <molecule id="Q8BKH7-2"/>
    <property type="protein sequence ID" value="ENSMUSP00000108749.2"/>
    <property type="gene ID" value="ENSMUSG00000038696.15"/>
</dbReference>
<dbReference type="Ensembl" id="ENSMUST00000113126.3">
    <molecule id="Q8BKH7-1"/>
    <property type="protein sequence ID" value="ENSMUSP00000108751.2"/>
    <property type="gene ID" value="ENSMUSG00000038696.15"/>
</dbReference>
<dbReference type="Ensembl" id="ENSMUST00000147337.8">
    <molecule id="Q8BKH7-1"/>
    <property type="protein sequence ID" value="ENSMUSP00000116494.2"/>
    <property type="gene ID" value="ENSMUSG00000038696.15"/>
</dbReference>
<dbReference type="GeneID" id="227743"/>
<dbReference type="KEGG" id="mmu:227743"/>
<dbReference type="UCSC" id="uc008jil.2">
    <molecule id="Q8BKH7-1"/>
    <property type="organism name" value="mouse"/>
</dbReference>
<dbReference type="AGR" id="MGI:2444554"/>
<dbReference type="CTD" id="79109"/>
<dbReference type="MGI" id="MGI:2444554">
    <property type="gene designation" value="Mapkap1"/>
</dbReference>
<dbReference type="VEuPathDB" id="HostDB:ENSMUSG00000038696"/>
<dbReference type="eggNOG" id="KOG3739">
    <property type="taxonomic scope" value="Eukaryota"/>
</dbReference>
<dbReference type="GeneTree" id="ENSGT00390000000642"/>
<dbReference type="HOGENOM" id="CLU_514767_0_0_1"/>
<dbReference type="InParanoid" id="Q8BKH7"/>
<dbReference type="OMA" id="NAKFWPQ"/>
<dbReference type="OrthoDB" id="241990at2759"/>
<dbReference type="PhylomeDB" id="Q8BKH7"/>
<dbReference type="TreeFam" id="TF315174"/>
<dbReference type="Reactome" id="R-MMU-1257604">
    <property type="pathway name" value="PIP3 activates AKT signaling"/>
</dbReference>
<dbReference type="Reactome" id="R-MMU-389357">
    <property type="pathway name" value="CD28 dependent PI3K/Akt signaling"/>
</dbReference>
<dbReference type="Reactome" id="R-MMU-5218920">
    <property type="pathway name" value="VEGFR2 mediated vascular permeability"/>
</dbReference>
<dbReference type="Reactome" id="R-MMU-6804757">
    <property type="pathway name" value="Regulation of TP53 Degradation"/>
</dbReference>
<dbReference type="Reactome" id="R-MMU-9856530">
    <property type="pathway name" value="High laminar flow shear stress activates signaling by PIEZO1 and PECAM1:CDH5:KDR in endothelial cells"/>
</dbReference>
<dbReference type="BioGRID-ORCS" id="227743">
    <property type="hits" value="6 hits in 78 CRISPR screens"/>
</dbReference>
<dbReference type="ChiTaRS" id="Mapkap1">
    <property type="organism name" value="mouse"/>
</dbReference>
<dbReference type="PRO" id="PR:Q8BKH7"/>
<dbReference type="Proteomes" id="UP000000589">
    <property type="component" value="Chromosome 2"/>
</dbReference>
<dbReference type="RNAct" id="Q8BKH7">
    <property type="molecule type" value="protein"/>
</dbReference>
<dbReference type="Bgee" id="ENSMUSG00000038696">
    <property type="expression patterns" value="Expressed in animal zygote and 257 other cell types or tissues"/>
</dbReference>
<dbReference type="ExpressionAtlas" id="Q8BKH7">
    <property type="expression patterns" value="baseline and differential"/>
</dbReference>
<dbReference type="GO" id="GO:0005929">
    <property type="term" value="C:cilium"/>
    <property type="evidence" value="ECO:0007669"/>
    <property type="project" value="Ensembl"/>
</dbReference>
<dbReference type="GO" id="GO:0005829">
    <property type="term" value="C:cytosol"/>
    <property type="evidence" value="ECO:0007669"/>
    <property type="project" value="Ensembl"/>
</dbReference>
<dbReference type="GO" id="GO:0005769">
    <property type="term" value="C:early endosome"/>
    <property type="evidence" value="ECO:0000250"/>
    <property type="project" value="UniProtKB"/>
</dbReference>
<dbReference type="GO" id="GO:0031901">
    <property type="term" value="C:early endosome membrane"/>
    <property type="evidence" value="ECO:0007669"/>
    <property type="project" value="UniProtKB-SubCell"/>
</dbReference>
<dbReference type="GO" id="GO:0005783">
    <property type="term" value="C:endoplasmic reticulum"/>
    <property type="evidence" value="ECO:0000250"/>
    <property type="project" value="UniProtKB"/>
</dbReference>
<dbReference type="GO" id="GO:0005789">
    <property type="term" value="C:endoplasmic reticulum membrane"/>
    <property type="evidence" value="ECO:0007669"/>
    <property type="project" value="UniProtKB-SubCell"/>
</dbReference>
<dbReference type="GO" id="GO:0000139">
    <property type="term" value="C:Golgi membrane"/>
    <property type="evidence" value="ECO:0007669"/>
    <property type="project" value="UniProtKB-SubCell"/>
</dbReference>
<dbReference type="GO" id="GO:0005770">
    <property type="term" value="C:late endosome"/>
    <property type="evidence" value="ECO:0000250"/>
    <property type="project" value="UniProtKB"/>
</dbReference>
<dbReference type="GO" id="GO:0031902">
    <property type="term" value="C:late endosome membrane"/>
    <property type="evidence" value="ECO:0007669"/>
    <property type="project" value="UniProtKB-SubCell"/>
</dbReference>
<dbReference type="GO" id="GO:0005765">
    <property type="term" value="C:lysosomal membrane"/>
    <property type="evidence" value="ECO:0007669"/>
    <property type="project" value="UniProtKB-SubCell"/>
</dbReference>
<dbReference type="GO" id="GO:0005764">
    <property type="term" value="C:lysosome"/>
    <property type="evidence" value="ECO:0000250"/>
    <property type="project" value="UniProtKB"/>
</dbReference>
<dbReference type="GO" id="GO:0005741">
    <property type="term" value="C:mitochondrial outer membrane"/>
    <property type="evidence" value="ECO:0000250"/>
    <property type="project" value="UniProtKB"/>
</dbReference>
<dbReference type="GO" id="GO:0005654">
    <property type="term" value="C:nucleoplasm"/>
    <property type="evidence" value="ECO:0007669"/>
    <property type="project" value="Ensembl"/>
</dbReference>
<dbReference type="GO" id="GO:0048471">
    <property type="term" value="C:perinuclear region of cytoplasm"/>
    <property type="evidence" value="ECO:0007669"/>
    <property type="project" value="UniProtKB-SubCell"/>
</dbReference>
<dbReference type="GO" id="GO:0005886">
    <property type="term" value="C:plasma membrane"/>
    <property type="evidence" value="ECO:0007669"/>
    <property type="project" value="UniProtKB-SubCell"/>
</dbReference>
<dbReference type="GO" id="GO:1902554">
    <property type="term" value="C:serine/threonine protein kinase complex"/>
    <property type="evidence" value="ECO:0007669"/>
    <property type="project" value="Ensembl"/>
</dbReference>
<dbReference type="GO" id="GO:0031932">
    <property type="term" value="C:TORC2 complex"/>
    <property type="evidence" value="ECO:0000314"/>
    <property type="project" value="UniProtKB"/>
</dbReference>
<dbReference type="GO" id="GO:0140767">
    <property type="term" value="F:enzyme-substrate adaptor activity"/>
    <property type="evidence" value="ECO:0000314"/>
    <property type="project" value="UniProtKB"/>
</dbReference>
<dbReference type="GO" id="GO:0070300">
    <property type="term" value="F:phosphatidic acid binding"/>
    <property type="evidence" value="ECO:0007669"/>
    <property type="project" value="Ensembl"/>
</dbReference>
<dbReference type="GO" id="GO:0005547">
    <property type="term" value="F:phosphatidylinositol-3,4,5-trisphosphate binding"/>
    <property type="evidence" value="ECO:0000250"/>
    <property type="project" value="UniProtKB"/>
</dbReference>
<dbReference type="GO" id="GO:0043325">
    <property type="term" value="F:phosphatidylinositol-3,4-bisphosphate binding"/>
    <property type="evidence" value="ECO:0007669"/>
    <property type="project" value="Ensembl"/>
</dbReference>
<dbReference type="GO" id="GO:0080025">
    <property type="term" value="F:phosphatidylinositol-3,5-bisphosphate binding"/>
    <property type="evidence" value="ECO:0007669"/>
    <property type="project" value="Ensembl"/>
</dbReference>
<dbReference type="GO" id="GO:0005546">
    <property type="term" value="F:phosphatidylinositol-4,5-bisphosphate binding"/>
    <property type="evidence" value="ECO:0007669"/>
    <property type="project" value="Ensembl"/>
</dbReference>
<dbReference type="GO" id="GO:0019901">
    <property type="term" value="F:protein kinase binding"/>
    <property type="evidence" value="ECO:0000250"/>
    <property type="project" value="ParkinsonsUK-UCL"/>
</dbReference>
<dbReference type="GO" id="GO:0031267">
    <property type="term" value="F:small GTPase binding"/>
    <property type="evidence" value="ECO:0007669"/>
    <property type="project" value="Ensembl"/>
</dbReference>
<dbReference type="GO" id="GO:0032869">
    <property type="term" value="P:cellular response to insulin stimulus"/>
    <property type="evidence" value="ECO:0000314"/>
    <property type="project" value="UniProtKB"/>
</dbReference>
<dbReference type="GO" id="GO:0031669">
    <property type="term" value="P:cellular response to nutrient levels"/>
    <property type="evidence" value="ECO:0000303"/>
    <property type="project" value="ComplexPortal"/>
</dbReference>
<dbReference type="GO" id="GO:0007010">
    <property type="term" value="P:cytoskeleton organization"/>
    <property type="evidence" value="ECO:0000303"/>
    <property type="project" value="ComplexPortal"/>
</dbReference>
<dbReference type="GO" id="GO:0043066">
    <property type="term" value="P:negative regulation of apoptotic process"/>
    <property type="evidence" value="ECO:0000303"/>
    <property type="project" value="ComplexPortal"/>
</dbReference>
<dbReference type="GO" id="GO:0046580">
    <property type="term" value="P:negative regulation of Ras protein signal transduction"/>
    <property type="evidence" value="ECO:0007669"/>
    <property type="project" value="Ensembl"/>
</dbReference>
<dbReference type="GO" id="GO:0030307">
    <property type="term" value="P:positive regulation of cell growth"/>
    <property type="evidence" value="ECO:0000303"/>
    <property type="project" value="ComplexPortal"/>
</dbReference>
<dbReference type="GO" id="GO:0033138">
    <property type="term" value="P:positive regulation of peptidyl-serine phosphorylation"/>
    <property type="evidence" value="ECO:0000315"/>
    <property type="project" value="UniProtKB"/>
</dbReference>
<dbReference type="GO" id="GO:1900407">
    <property type="term" value="P:regulation of cellular response to oxidative stress"/>
    <property type="evidence" value="ECO:0000315"/>
    <property type="project" value="UniProtKB"/>
</dbReference>
<dbReference type="GO" id="GO:0038203">
    <property type="term" value="P:TORC2 signaling"/>
    <property type="evidence" value="ECO:0000314"/>
    <property type="project" value="UniProtKB"/>
</dbReference>
<dbReference type="CDD" id="cd13331">
    <property type="entry name" value="PH_Avo1"/>
    <property type="match status" value="1"/>
</dbReference>
<dbReference type="FunFam" id="2.30.29.30:FF:000585">
    <property type="entry name" value="target of rapamycin complex 2 subunit MAPKAP1 isoform X3"/>
    <property type="match status" value="1"/>
</dbReference>
<dbReference type="Gene3D" id="2.30.29.30">
    <property type="entry name" value="Pleckstrin-homology domain (PH domain)/Phosphotyrosine-binding domain (PTB)"/>
    <property type="match status" value="1"/>
</dbReference>
<dbReference type="InterPro" id="IPR031567">
    <property type="entry name" value="CRIM_dom"/>
</dbReference>
<dbReference type="InterPro" id="IPR011993">
    <property type="entry name" value="PH-like_dom_sf"/>
</dbReference>
<dbReference type="InterPro" id="IPR008828">
    <property type="entry name" value="Sin1/Avo1"/>
</dbReference>
<dbReference type="InterPro" id="IPR032679">
    <property type="entry name" value="Sin1_N"/>
</dbReference>
<dbReference type="InterPro" id="IPR031313">
    <property type="entry name" value="Sin1_PH_dom"/>
</dbReference>
<dbReference type="PANTHER" id="PTHR13335">
    <property type="entry name" value="TARGET OF RAPAMYCIN COMPLEX 2 SUBUNIT MAPKAP1"/>
    <property type="match status" value="1"/>
</dbReference>
<dbReference type="PANTHER" id="PTHR13335:SF1">
    <property type="entry name" value="TARGET OF RAPAMYCIN COMPLEX 2 SUBUNIT MAPKAP1"/>
    <property type="match status" value="1"/>
</dbReference>
<dbReference type="Pfam" id="PF16978">
    <property type="entry name" value="CRIM"/>
    <property type="match status" value="1"/>
</dbReference>
<dbReference type="Pfam" id="PF05422">
    <property type="entry name" value="SIN1"/>
    <property type="match status" value="1"/>
</dbReference>
<dbReference type="Pfam" id="PF16979">
    <property type="entry name" value="SIN1_PH"/>
    <property type="match status" value="1"/>
</dbReference>
<feature type="initiator methionine" description="Removed" evidence="2">
    <location>
        <position position="1"/>
    </location>
</feature>
<feature type="chain" id="PRO_0000328033" description="Target of rapamycin complex 2 subunit MAPKAP1">
    <location>
        <begin position="2"/>
        <end position="522"/>
    </location>
</feature>
<feature type="domain" description="CRIM" evidence="3">
    <location>
        <begin position="139"/>
        <end position="267"/>
    </location>
</feature>
<feature type="domain" description="SIN1-type PH" evidence="3">
    <location>
        <begin position="382"/>
        <end position="487"/>
    </location>
</feature>
<feature type="region of interest" description="Interaction with NBN" evidence="2">
    <location>
        <begin position="2"/>
        <end position="267"/>
    </location>
</feature>
<feature type="region of interest" description="Interaction with MAP3K2" evidence="2">
    <location>
        <begin position="2"/>
        <end position="184"/>
    </location>
</feature>
<feature type="region of interest" description="Disordered" evidence="4">
    <location>
        <begin position="38"/>
        <end position="59"/>
    </location>
</feature>
<feature type="region of interest" description="SIN1-type RBD" evidence="3">
    <location>
        <begin position="279"/>
        <end position="353"/>
    </location>
</feature>
<feature type="region of interest" description="Interaction with ATF2" evidence="2">
    <location>
        <begin position="468"/>
        <end position="522"/>
    </location>
</feature>
<feature type="binding site" evidence="2">
    <location>
        <position position="393"/>
    </location>
    <ligand>
        <name>a 1,2-diacyl-sn-glycero-3-phospho-(1D-myo-inositol-3,4,5-trisphosphate)</name>
        <dbReference type="ChEBI" id="CHEBI:57836"/>
    </ligand>
</feature>
<feature type="binding site" evidence="2">
    <location>
        <position position="428"/>
    </location>
    <ligand>
        <name>a 1,2-diacyl-sn-glycero-3-phospho-(1D-myo-inositol-3,4,5-trisphosphate)</name>
        <dbReference type="ChEBI" id="CHEBI:57836"/>
    </ligand>
</feature>
<feature type="binding site" evidence="2">
    <location>
        <position position="464"/>
    </location>
    <ligand>
        <name>a 1,2-diacyl-sn-glycero-3-phospho-(1D-myo-inositol-3,4,5-trisphosphate)</name>
        <dbReference type="ChEBI" id="CHEBI:57836"/>
    </ligand>
</feature>
<feature type="modified residue" description="N-acetylalanine" evidence="2">
    <location>
        <position position="2"/>
    </location>
</feature>
<feature type="modified residue" description="Phosphothreonine; by PKB/AKT1 and RPS6KB1" evidence="10 11 12">
    <location>
        <position position="86"/>
    </location>
</feature>
<feature type="modified residue" description="Phosphoserine; by PKC" evidence="13">
    <location>
        <position position="128"/>
    </location>
</feature>
<feature type="modified residue" description="Phosphoserine" evidence="2">
    <location>
        <position position="186"/>
    </location>
</feature>
<feature type="modified residue" description="Phosphoserine" evidence="13">
    <location>
        <position position="315"/>
    </location>
</feature>
<feature type="modified residue" description="Phosphoserine" evidence="13">
    <location>
        <position position="356"/>
    </location>
</feature>
<feature type="modified residue" description="Phosphothreonine; by RPS6KB1" evidence="11">
    <location>
        <position position="398"/>
    </location>
</feature>
<feature type="modified residue" description="Phosphoserine" evidence="2">
    <location>
        <position position="510"/>
    </location>
</feature>
<feature type="splice variant" id="VSP_033208" description="In isoform 3." evidence="16">
    <location>
        <begin position="1"/>
        <end position="192"/>
    </location>
</feature>
<feature type="splice variant" id="VSP_033209" description="In isoform 2." evidence="16">
    <location>
        <begin position="321"/>
        <end position="356"/>
    </location>
</feature>
<feature type="mutagenesis site" description="Abolished phosphorylation by AKT1. Abolished phosphorylation by RPS6KB1; when associated with A-398." evidence="10 11">
    <original>T</original>
    <variation>A</variation>
    <location>
        <position position="86"/>
    </location>
</feature>
<feature type="mutagenesis site" description="Mimics phosphorylation." evidence="10">
    <original>T</original>
    <variation>E</variation>
    <location>
        <position position="86"/>
    </location>
</feature>
<feature type="mutagenesis site" description="Abolished phosphorylation by PKC, leading to deacreased ability of the mTORC2 complex to phosphorylate SGK1." evidence="13">
    <original>S</original>
    <variation>A</variation>
    <location>
        <position position="128"/>
    </location>
</feature>
<feature type="mutagenesis site" description="Abolished phosphorylation by RPS6KB1; when associated with A-86." evidence="10 11">
    <original>T</original>
    <variation>A</variation>
    <location>
        <position position="398"/>
    </location>
</feature>
<feature type="sequence conflict" description="In Ref. 3; AAH43296." evidence="16" ref="3">
    <original>E</original>
    <variation>K</variation>
    <location>
        <position position="516"/>
    </location>
</feature>
<gene>
    <name evidence="18" type="primary">Mapkap1</name>
    <name evidence="15" type="synonym">Mip1</name>
    <name evidence="15" type="synonym">Sin1</name>
</gene>
<sequence length="522" mass="59009">MAFLDNPTIILAHIRQSHVTSDDTGMCEMVLIDHDVDLEKTHPPSVPGDSGSEVQGSSGETQGYIYAQSVDITSSWDFGIRRRSNTAQRLERLRKERQNQIKCKNIQWKERNSKQSAQELKSLFEKKSLKEKPPSSGKQSILSVRLEQCPLQLNNPFNEYSKFDGKGHVGTTATKKIDVYLPLHSSQDRLLPMTVVTMASARVQDLIGLICWQYTSEGREPKLNDNVSAYCLHIAEDDGEVDTDFPPLDSNEPIHKFGFSTLALVEKYSSPGLTSKESLFVRINAAHGFSLIQVDNTKVTMKEILLKAVKRRKGSQKISGPQYRLEKQSEPNIAVDLESTLESQNAWEFCLVRENSSRADGVFEEDSQIDIATVQDMLSSHHYKSFKVSMIHRLRFTTDVQLGISGDKVEIDPVTNQKASTKFWIKQKPISIDCDLLCACDLAEEKSPSHAVFKLTYLSSHDYKHLYFESDAATVSEIVLKVNYILESRASTARADYLAQKQRKLNRRTSFSFQKEKKSGQQ</sequence>
<name>SIN1_MOUSE</name>
<reference key="1">
    <citation type="journal article" date="2005" name="Science">
        <title>The transcriptional landscape of the mammalian genome.</title>
        <authorList>
            <person name="Carninci P."/>
            <person name="Kasukawa T."/>
            <person name="Katayama S."/>
            <person name="Gough J."/>
            <person name="Frith M.C."/>
            <person name="Maeda N."/>
            <person name="Oyama R."/>
            <person name="Ravasi T."/>
            <person name="Lenhard B."/>
            <person name="Wells C."/>
            <person name="Kodzius R."/>
            <person name="Shimokawa K."/>
            <person name="Bajic V.B."/>
            <person name="Brenner S.E."/>
            <person name="Batalov S."/>
            <person name="Forrest A.R."/>
            <person name="Zavolan M."/>
            <person name="Davis M.J."/>
            <person name="Wilming L.G."/>
            <person name="Aidinis V."/>
            <person name="Allen J.E."/>
            <person name="Ambesi-Impiombato A."/>
            <person name="Apweiler R."/>
            <person name="Aturaliya R.N."/>
            <person name="Bailey T.L."/>
            <person name="Bansal M."/>
            <person name="Baxter L."/>
            <person name="Beisel K.W."/>
            <person name="Bersano T."/>
            <person name="Bono H."/>
            <person name="Chalk A.M."/>
            <person name="Chiu K.P."/>
            <person name="Choudhary V."/>
            <person name="Christoffels A."/>
            <person name="Clutterbuck D.R."/>
            <person name="Crowe M.L."/>
            <person name="Dalla E."/>
            <person name="Dalrymple B.P."/>
            <person name="de Bono B."/>
            <person name="Della Gatta G."/>
            <person name="di Bernardo D."/>
            <person name="Down T."/>
            <person name="Engstrom P."/>
            <person name="Fagiolini M."/>
            <person name="Faulkner G."/>
            <person name="Fletcher C.F."/>
            <person name="Fukushima T."/>
            <person name="Furuno M."/>
            <person name="Futaki S."/>
            <person name="Gariboldi M."/>
            <person name="Georgii-Hemming P."/>
            <person name="Gingeras T.R."/>
            <person name="Gojobori T."/>
            <person name="Green R.E."/>
            <person name="Gustincich S."/>
            <person name="Harbers M."/>
            <person name="Hayashi Y."/>
            <person name="Hensch T.K."/>
            <person name="Hirokawa N."/>
            <person name="Hill D."/>
            <person name="Huminiecki L."/>
            <person name="Iacono M."/>
            <person name="Ikeo K."/>
            <person name="Iwama A."/>
            <person name="Ishikawa T."/>
            <person name="Jakt M."/>
            <person name="Kanapin A."/>
            <person name="Katoh M."/>
            <person name="Kawasawa Y."/>
            <person name="Kelso J."/>
            <person name="Kitamura H."/>
            <person name="Kitano H."/>
            <person name="Kollias G."/>
            <person name="Krishnan S.P."/>
            <person name="Kruger A."/>
            <person name="Kummerfeld S.K."/>
            <person name="Kurochkin I.V."/>
            <person name="Lareau L.F."/>
            <person name="Lazarevic D."/>
            <person name="Lipovich L."/>
            <person name="Liu J."/>
            <person name="Liuni S."/>
            <person name="McWilliam S."/>
            <person name="Madan Babu M."/>
            <person name="Madera M."/>
            <person name="Marchionni L."/>
            <person name="Matsuda H."/>
            <person name="Matsuzawa S."/>
            <person name="Miki H."/>
            <person name="Mignone F."/>
            <person name="Miyake S."/>
            <person name="Morris K."/>
            <person name="Mottagui-Tabar S."/>
            <person name="Mulder N."/>
            <person name="Nakano N."/>
            <person name="Nakauchi H."/>
            <person name="Ng P."/>
            <person name="Nilsson R."/>
            <person name="Nishiguchi S."/>
            <person name="Nishikawa S."/>
            <person name="Nori F."/>
            <person name="Ohara O."/>
            <person name="Okazaki Y."/>
            <person name="Orlando V."/>
            <person name="Pang K.C."/>
            <person name="Pavan W.J."/>
            <person name="Pavesi G."/>
            <person name="Pesole G."/>
            <person name="Petrovsky N."/>
            <person name="Piazza S."/>
            <person name="Reed J."/>
            <person name="Reid J.F."/>
            <person name="Ring B.Z."/>
            <person name="Ringwald M."/>
            <person name="Rost B."/>
            <person name="Ruan Y."/>
            <person name="Salzberg S.L."/>
            <person name="Sandelin A."/>
            <person name="Schneider C."/>
            <person name="Schoenbach C."/>
            <person name="Sekiguchi K."/>
            <person name="Semple C.A."/>
            <person name="Seno S."/>
            <person name="Sessa L."/>
            <person name="Sheng Y."/>
            <person name="Shibata Y."/>
            <person name="Shimada H."/>
            <person name="Shimada K."/>
            <person name="Silva D."/>
            <person name="Sinclair B."/>
            <person name="Sperling S."/>
            <person name="Stupka E."/>
            <person name="Sugiura K."/>
            <person name="Sultana R."/>
            <person name="Takenaka Y."/>
            <person name="Taki K."/>
            <person name="Tammoja K."/>
            <person name="Tan S.L."/>
            <person name="Tang S."/>
            <person name="Taylor M.S."/>
            <person name="Tegner J."/>
            <person name="Teichmann S.A."/>
            <person name="Ueda H.R."/>
            <person name="van Nimwegen E."/>
            <person name="Verardo R."/>
            <person name="Wei C.L."/>
            <person name="Yagi K."/>
            <person name="Yamanishi H."/>
            <person name="Zabarovsky E."/>
            <person name="Zhu S."/>
            <person name="Zimmer A."/>
            <person name="Hide W."/>
            <person name="Bult C."/>
            <person name="Grimmond S.M."/>
            <person name="Teasdale R.D."/>
            <person name="Liu E.T."/>
            <person name="Brusic V."/>
            <person name="Quackenbush J."/>
            <person name="Wahlestedt C."/>
            <person name="Mattick J.S."/>
            <person name="Hume D.A."/>
            <person name="Kai C."/>
            <person name="Sasaki D."/>
            <person name="Tomaru Y."/>
            <person name="Fukuda S."/>
            <person name="Kanamori-Katayama M."/>
            <person name="Suzuki M."/>
            <person name="Aoki J."/>
            <person name="Arakawa T."/>
            <person name="Iida J."/>
            <person name="Imamura K."/>
            <person name="Itoh M."/>
            <person name="Kato T."/>
            <person name="Kawaji H."/>
            <person name="Kawagashira N."/>
            <person name="Kawashima T."/>
            <person name="Kojima M."/>
            <person name="Kondo S."/>
            <person name="Konno H."/>
            <person name="Nakano K."/>
            <person name="Ninomiya N."/>
            <person name="Nishio T."/>
            <person name="Okada M."/>
            <person name="Plessy C."/>
            <person name="Shibata K."/>
            <person name="Shiraki T."/>
            <person name="Suzuki S."/>
            <person name="Tagami M."/>
            <person name="Waki K."/>
            <person name="Watahiki A."/>
            <person name="Okamura-Oho Y."/>
            <person name="Suzuki H."/>
            <person name="Kawai J."/>
            <person name="Hayashizaki Y."/>
        </authorList>
    </citation>
    <scope>NUCLEOTIDE SEQUENCE [LARGE SCALE MRNA] (ISOFORM 1)</scope>
    <source>
        <strain>C57BL/6J</strain>
        <tissue>Embryo</tissue>
        <tissue>Eye</tissue>
        <tissue>Placenta</tissue>
    </source>
</reference>
<reference key="2">
    <citation type="journal article" date="2009" name="PLoS Biol.">
        <title>Lineage-specific biology revealed by a finished genome assembly of the mouse.</title>
        <authorList>
            <person name="Church D.M."/>
            <person name="Goodstadt L."/>
            <person name="Hillier L.W."/>
            <person name="Zody M.C."/>
            <person name="Goldstein S."/>
            <person name="She X."/>
            <person name="Bult C.J."/>
            <person name="Agarwala R."/>
            <person name="Cherry J.L."/>
            <person name="DiCuccio M."/>
            <person name="Hlavina W."/>
            <person name="Kapustin Y."/>
            <person name="Meric P."/>
            <person name="Maglott D."/>
            <person name="Birtle Z."/>
            <person name="Marques A.C."/>
            <person name="Graves T."/>
            <person name="Zhou S."/>
            <person name="Teague B."/>
            <person name="Potamousis K."/>
            <person name="Churas C."/>
            <person name="Place M."/>
            <person name="Herschleb J."/>
            <person name="Runnheim R."/>
            <person name="Forrest D."/>
            <person name="Amos-Landgraf J."/>
            <person name="Schwartz D.C."/>
            <person name="Cheng Z."/>
            <person name="Lindblad-Toh K."/>
            <person name="Eichler E.E."/>
            <person name="Ponting C.P."/>
        </authorList>
    </citation>
    <scope>NUCLEOTIDE SEQUENCE [LARGE SCALE GENOMIC DNA]</scope>
    <source>
        <strain>C57BL/6J</strain>
    </source>
</reference>
<reference key="3">
    <citation type="journal article" date="2004" name="Genome Res.">
        <title>The status, quality, and expansion of the NIH full-length cDNA project: the Mammalian Gene Collection (MGC).</title>
        <authorList>
            <consortium name="The MGC Project Team"/>
        </authorList>
    </citation>
    <scope>NUCLEOTIDE SEQUENCE [LARGE SCALE MRNA] (ISOFORM 1)</scope>
    <source>
        <strain>C57BL/6J</strain>
        <strain>FVB/N</strain>
        <tissue>Brain</tissue>
        <tissue>Mammary tumor</tissue>
        <tissue>Olfactory epithelium</tissue>
    </source>
</reference>
<reference key="4">
    <citation type="journal article" date="2006" name="Cell">
        <title>SIN1/MIP1 maintains rictor-mTOR complex integrity and regulates Akt phosphorylation and substrate specificity.</title>
        <authorList>
            <person name="Jacinto E."/>
            <person name="Facchinetti V."/>
            <person name="Liu D."/>
            <person name="Soto N."/>
            <person name="Wei S."/>
            <person name="Jung S.Y."/>
            <person name="Huang Q."/>
            <person name="Qin J."/>
            <person name="Su B."/>
        </authorList>
    </citation>
    <scope>FUNCTION</scope>
    <scope>DISRUPTION PHENOTYPE</scope>
</reference>
<reference key="5">
    <citation type="journal article" date="2006" name="Genes Cells">
        <title>Sin1 binds to both ATF-2 and p38 and enhances ATF-2-dependent transcription in an SAPK signaling pathway.</title>
        <authorList>
            <person name="Makino C."/>
            <person name="Sano Y."/>
            <person name="Shinagawa T."/>
            <person name="Millar J.B."/>
            <person name="Ishii S."/>
        </authorList>
    </citation>
    <scope>TISSUE SPECIFICITY</scope>
</reference>
<reference key="6">
    <citation type="journal article" date="2011" name="J. Biol. Chem.">
        <title>mSIN1 protein mediates SGK1 protein interaction with mTORC2 protein complex and is required for selective activation of the epithelial sodium channel.</title>
        <authorList>
            <person name="Lu M."/>
            <person name="Wang J."/>
            <person name="Ives H.E."/>
            <person name="Pearce D."/>
        </authorList>
    </citation>
    <scope>FUNCTION</scope>
</reference>
<reference key="7">
    <citation type="journal article" date="2012" name="Mol. Cell">
        <title>mTOR complex 2 regulates proper turnover of insulin receptor substrate-1 via the ubiquitin ligase subunit Fbw8.</title>
        <authorList>
            <person name="Kim S.J."/>
            <person name="DeStefano M.A."/>
            <person name="Oh W.J."/>
            <person name="Wu C.C."/>
            <person name="Vega-Cotto N.M."/>
            <person name="Finlan M."/>
            <person name="Liu D."/>
            <person name="Su B."/>
            <person name="Jacinto E."/>
        </authorList>
    </citation>
    <scope>FUNCTION</scope>
</reference>
<reference key="8">
    <citation type="journal article" date="2013" name="Cell Metab.">
        <title>Dynamic adipocyte phosphoproteome reveals that Akt directly regulates mTORC2.</title>
        <authorList>
            <person name="Humphrey S.J."/>
            <person name="Yang G."/>
            <person name="Yang P."/>
            <person name="Fazakerley D.J."/>
            <person name="Stoeckli J."/>
            <person name="Yang J.Y."/>
            <person name="James D.E."/>
        </authorList>
    </citation>
    <scope>PHOSPHORYLATION AT THR-86</scope>
    <scope>MUTAGENESIS OF THR-86</scope>
</reference>
<reference key="9">
    <citation type="journal article" date="2013" name="Genes Dev.">
        <title>mTOR complex 2 phosphorylates IMP1 cotranslationally to promote IGF2 production and the proliferation of mouse embryonic fibroblasts.</title>
        <authorList>
            <person name="Dai N."/>
            <person name="Christiansen J."/>
            <person name="Nielsen F.C."/>
            <person name="Avruch J."/>
        </authorList>
    </citation>
    <scope>FUNCTION</scope>
</reference>
<reference key="10">
    <citation type="journal article" date="2013" name="Nat. Cell Biol.">
        <title>Sin1 phosphorylation impairs mTORC2 complex integrity and inhibits downstream Akt signalling to suppress tumorigenesis.</title>
        <authorList>
            <person name="Liu P."/>
            <person name="Gan W."/>
            <person name="Inuzuka H."/>
            <person name="Lazorchak A.S."/>
            <person name="Gao D."/>
            <person name="Arojo O."/>
            <person name="Liu D."/>
            <person name="Wan L."/>
            <person name="Zhai B."/>
            <person name="Yu Y."/>
            <person name="Yuan M."/>
            <person name="Kim B.M."/>
            <person name="Shaik S."/>
            <person name="Menon S."/>
            <person name="Gygi S.P."/>
            <person name="Lee T.H."/>
            <person name="Asara J.M."/>
            <person name="Manning B.D."/>
            <person name="Blenis J."/>
            <person name="Su B."/>
            <person name="Wei W."/>
        </authorList>
    </citation>
    <scope>FUNCTION</scope>
    <scope>IDENTIFICATION IN THE MTORC2 COMPLEX</scope>
    <scope>PHOSPHORYLATION AT THR-86 AND THR-398</scope>
    <scope>MUTAGENESIS OF THR-86 AND THR-398</scope>
</reference>
<reference key="11">
    <citation type="journal article" date="2015" name="Cell Rep.">
        <title>A Positive Feedback Loop between Akt and mTORC2 via SIN1 Phosphorylation.</title>
        <authorList>
            <person name="Yang G."/>
            <person name="Murashige D.S."/>
            <person name="Humphrey S.J."/>
            <person name="James D.E."/>
        </authorList>
    </citation>
    <scope>PHOSPHORYLATION AT THR-86</scope>
</reference>
<reference key="12">
    <citation type="journal article" date="2019" name="J. Cell Sci.">
        <title>Phosphorylation at distinct subcellular locations underlies specificity in mTORC2-mediated activation of SGK1 and Akt.</title>
        <authorList>
            <person name="Gleason C.E."/>
            <person name="Oses-Prieto J.A."/>
            <person name="Li K.H."/>
            <person name="Saha B."/>
            <person name="Situ G."/>
            <person name="Burlingame A.L."/>
            <person name="Pearce D."/>
        </authorList>
    </citation>
    <scope>FUNCTION</scope>
    <scope>SUBCELLULAR LOCATION</scope>
    <scope>PHOSPHORYLATION AT SER-128; SER-315 AND SER-356</scope>
    <scope>MUTAGENESIS OF SER-128</scope>
</reference>
<reference key="13">
    <citation type="journal article" date="2021" name="Sci. Signal.">
        <title>mTORC2 controls the activity of PKC and Akt by phosphorylating a conserved TOR interaction motif.</title>
        <authorList>
            <person name="Baffi T.R."/>
            <person name="Lorden G."/>
            <person name="Wozniak J.M."/>
            <person name="Feichtner A."/>
            <person name="Yeung W."/>
            <person name="Kornev A.P."/>
            <person name="King C.C."/>
            <person name="Del Rio J.C."/>
            <person name="Limaye A.J."/>
            <person name="Bogomolovas J."/>
            <person name="Gould C.M."/>
            <person name="Chen J."/>
            <person name="Kennedy E.J."/>
            <person name="Kannan N."/>
            <person name="Gonzalez D.J."/>
            <person name="Stefan E."/>
            <person name="Taylor S.S."/>
            <person name="Newton A.C."/>
        </authorList>
    </citation>
    <scope>FUNCTION</scope>
</reference>
<protein>
    <recommendedName>
        <fullName evidence="16">Target of rapamycin complex 2 subunit MAPKAP1</fullName>
        <shortName evidence="16">TORC2 subunit MAPKAP1</shortName>
    </recommendedName>
    <alternativeName>
        <fullName evidence="15">Mitogen-activated protein kinase 2-associated protein 1</fullName>
    </alternativeName>
    <alternativeName>
        <fullName evidence="15">Stress-activated map kinase-interacting protein 1</fullName>
        <shortName evidence="15">SAPK-interacting protein 1</shortName>
    </alternativeName>
</protein>